<protein>
    <recommendedName>
        <fullName>Enhanced filamentous growth protein 1</fullName>
    </recommendedName>
</protein>
<proteinExistence type="evidence at protein level"/>
<gene>
    <name type="primary">EFG1</name>
    <name type="ordered locus">CAALFM_CR07890WA</name>
    <name type="ORF">CaO19.610</name>
    <name type="ORF">CaO19.8243</name>
</gene>
<evidence type="ECO:0000255" key="1">
    <source>
        <dbReference type="PROSITE-ProRule" id="PRU00630"/>
    </source>
</evidence>
<evidence type="ECO:0000256" key="2">
    <source>
        <dbReference type="SAM" id="MobiDB-lite"/>
    </source>
</evidence>
<evidence type="ECO:0000269" key="3">
    <source>
    </source>
</evidence>
<evidence type="ECO:0000269" key="4">
    <source>
    </source>
</evidence>
<evidence type="ECO:0000269" key="5">
    <source>
    </source>
</evidence>
<evidence type="ECO:0000269" key="6">
    <source>
    </source>
</evidence>
<evidence type="ECO:0000269" key="7">
    <source>
    </source>
</evidence>
<evidence type="ECO:0000269" key="8">
    <source>
    </source>
</evidence>
<evidence type="ECO:0000269" key="9">
    <source>
    </source>
</evidence>
<evidence type="ECO:0000269" key="10">
    <source>
    </source>
</evidence>
<evidence type="ECO:0000269" key="11">
    <source>
    </source>
</evidence>
<evidence type="ECO:0000269" key="12">
    <source>
    </source>
</evidence>
<evidence type="ECO:0000269" key="13">
    <source>
    </source>
</evidence>
<evidence type="ECO:0000269" key="14">
    <source>
    </source>
</evidence>
<evidence type="ECO:0000269" key="15">
    <source>
    </source>
</evidence>
<evidence type="ECO:0000269" key="16">
    <source>
    </source>
</evidence>
<evidence type="ECO:0000269" key="17">
    <source>
    </source>
</evidence>
<evidence type="ECO:0000269" key="18">
    <source>
    </source>
</evidence>
<evidence type="ECO:0000269" key="19">
    <source>
    </source>
</evidence>
<evidence type="ECO:0000269" key="20">
    <source>
    </source>
</evidence>
<evidence type="ECO:0000269" key="21">
    <source>
    </source>
</evidence>
<evidence type="ECO:0000269" key="22">
    <source>
    </source>
</evidence>
<evidence type="ECO:0000269" key="23">
    <source>
    </source>
</evidence>
<evidence type="ECO:0000269" key="24">
    <source>
    </source>
</evidence>
<evidence type="ECO:0000269" key="25">
    <source>
    </source>
</evidence>
<evidence type="ECO:0000269" key="26">
    <source>
    </source>
</evidence>
<evidence type="ECO:0000269" key="27">
    <source>
    </source>
</evidence>
<evidence type="ECO:0000269" key="28">
    <source>
    </source>
</evidence>
<evidence type="ECO:0000269" key="29">
    <source>
    </source>
</evidence>
<evidence type="ECO:0000269" key="30">
    <source>
    </source>
</evidence>
<evidence type="ECO:0000269" key="31">
    <source>
    </source>
</evidence>
<evidence type="ECO:0000269" key="32">
    <source>
    </source>
</evidence>
<evidence type="ECO:0000269" key="33">
    <source>
    </source>
</evidence>
<evidence type="ECO:0000305" key="34"/>
<accession>Q59X67</accession>
<accession>A0A1D8PTM1</accession>
<accession>Q59XB5</accession>
<organism>
    <name type="scientific">Candida albicans (strain SC5314 / ATCC MYA-2876)</name>
    <name type="common">Yeast</name>
    <dbReference type="NCBI Taxonomy" id="237561"/>
    <lineage>
        <taxon>Eukaryota</taxon>
        <taxon>Fungi</taxon>
        <taxon>Dikarya</taxon>
        <taxon>Ascomycota</taxon>
        <taxon>Saccharomycotina</taxon>
        <taxon>Pichiomycetes</taxon>
        <taxon>Debaryomycetaceae</taxon>
        <taxon>Candida/Lodderomyces clade</taxon>
        <taxon>Candida</taxon>
    </lineage>
</organism>
<feature type="chain" id="PRO_0000420156" description="Enhanced filamentous growth protein 1">
    <location>
        <begin position="1"/>
        <end position="550"/>
    </location>
</feature>
<feature type="domain" description="HTH APSES-type" evidence="1">
    <location>
        <begin position="206"/>
        <end position="312"/>
    </location>
</feature>
<feature type="DNA-binding region" description="H-T-H motif" evidence="1">
    <location>
        <begin position="240"/>
        <end position="261"/>
    </location>
</feature>
<feature type="region of interest" description="Disordered" evidence="2">
    <location>
        <begin position="17"/>
        <end position="48"/>
    </location>
</feature>
<feature type="region of interest" description="Disordered" evidence="2">
    <location>
        <begin position="72"/>
        <end position="95"/>
    </location>
</feature>
<feature type="region of interest" description="Disordered" evidence="2">
    <location>
        <begin position="123"/>
        <end position="182"/>
    </location>
</feature>
<feature type="region of interest" description="Disordered" evidence="2">
    <location>
        <begin position="329"/>
        <end position="435"/>
    </location>
</feature>
<feature type="region of interest" description="Disordered" evidence="2">
    <location>
        <begin position="476"/>
        <end position="550"/>
    </location>
</feature>
<feature type="compositionally biased region" description="Polar residues" evidence="2">
    <location>
        <begin position="123"/>
        <end position="153"/>
    </location>
</feature>
<feature type="compositionally biased region" description="Low complexity" evidence="2">
    <location>
        <begin position="342"/>
        <end position="383"/>
    </location>
</feature>
<feature type="compositionally biased region" description="Polar residues" evidence="2">
    <location>
        <begin position="384"/>
        <end position="394"/>
    </location>
</feature>
<feature type="compositionally biased region" description="Low complexity" evidence="2">
    <location>
        <begin position="395"/>
        <end position="416"/>
    </location>
</feature>
<feature type="compositionally biased region" description="Polar residues" evidence="2">
    <location>
        <begin position="420"/>
        <end position="435"/>
    </location>
</feature>
<feature type="compositionally biased region" description="Low complexity" evidence="2">
    <location>
        <begin position="476"/>
        <end position="502"/>
    </location>
</feature>
<feature type="compositionally biased region" description="Polar residues" evidence="2">
    <location>
        <begin position="514"/>
        <end position="544"/>
    </location>
</feature>
<feature type="modified residue" description="Phosphothreonine" evidence="27">
    <location>
        <position position="181"/>
    </location>
</feature>
<feature type="modified residue" description="Phosphothreonine" evidence="9">
    <location>
        <position position="208"/>
    </location>
</feature>
<feature type="mutagenesis site" description="Impairs chlamydospore formation and hypha formation." evidence="5 9">
    <original>T</original>
    <variation>A</variation>
    <location>
        <position position="208"/>
    </location>
</feature>
<feature type="mutagenesis site" description="Impairs chlamydospore formation but causes hyperfilamentation." evidence="5 9">
    <original>T</original>
    <variation>E</variation>
    <location>
        <position position="208"/>
    </location>
</feature>
<name>EFG1_CANAL</name>
<comment type="function">
    <text evidence="3 4 5 6 7 8 9 10 11 12 13 14 15 16 17 20 21 22 23 24 25 26 27 28 29 30 31 32 33">Transcriptional regulator of the switch between 2 heritable states, the white and opaque states. These 2 cell types differ in many characteristics, including cell structure, mating competence, and virulence. Each state is heritable for many generations, and switching between states occurs stochastically, at low frequency. Antagonizes the action of WOR1, WOR2 and CZF1, and promotes the white state. In white cells, EFG1 represses WOR1 indirectly through WOR2 to maintain white cell identity. Binds target gene promoters at the EFG1 recognition sequence (EGRbox) TATGCATA. Acts as a major regulator of cell wall dynamics and plays a role in interactions with extracellular matrices. Required for TOR1-dependent cellular aggregation and adhesin expression. Required for both normoxic and hypoxic biofilm formation. Hypoxic biofilm formation is a major cause of perseverance and antifungal resistance during infections. Contributes to virulence by regulating hyphal formation and the factors that enable C.albicans to invade and injure endothelial cells. Required for the formation of thick-walled big resting spores called chlamydospores, which survive in unfavorable conditions. Mediates the expression of virulence factors SAP4, SAP5and SAP6 during infection. Involved in drug resistance by regulating the expression of ERG3.</text>
</comment>
<comment type="subunit">
    <text evidence="14 21 24 31">Interacts with CZF1 and FLO8.</text>
</comment>
<comment type="subcellular location">
    <subcellularLocation>
        <location evidence="1">Nucleus</location>
    </subcellularLocation>
</comment>
<comment type="induction">
    <text evidence="4 18 19 30">Expression is specific for the white growth phase. Down-regulation under hyphal induction depends on the presence of EFG1 itself which plays a role of autoinhibitor and the protein kinase A isoforms TPK1 and TPK2.</text>
</comment>
<comment type="PTM">
    <text evidence="9 27">Thr-208 is a phosphorylation target to promote hyphal induction by a subset of environmental cues. Phosphorylation at Thr-181 by the CDc28/HGC1 complex represses cell separation genes and leads to hyphal chain formation.</text>
</comment>
<comment type="similarity">
    <text evidence="34">Belongs to the EFG1/PHD1/stuA family.</text>
</comment>
<reference key="1">
    <citation type="journal article" date="2004" name="Proc. Natl. Acad. Sci. U.S.A.">
        <title>The diploid genome sequence of Candida albicans.</title>
        <authorList>
            <person name="Jones T."/>
            <person name="Federspiel N.A."/>
            <person name="Chibana H."/>
            <person name="Dungan J."/>
            <person name="Kalman S."/>
            <person name="Magee B.B."/>
            <person name="Newport G."/>
            <person name="Thorstenson Y.R."/>
            <person name="Agabian N."/>
            <person name="Magee P.T."/>
            <person name="Davis R.W."/>
            <person name="Scherer S."/>
        </authorList>
    </citation>
    <scope>NUCLEOTIDE SEQUENCE [LARGE SCALE GENOMIC DNA]</scope>
    <source>
        <strain>SC5314 / ATCC MYA-2876</strain>
    </source>
</reference>
<reference key="2">
    <citation type="journal article" date="2007" name="Genome Biol.">
        <title>Assembly of the Candida albicans genome into sixteen supercontigs aligned on the eight chromosomes.</title>
        <authorList>
            <person name="van het Hoog M."/>
            <person name="Rast T.J."/>
            <person name="Martchenko M."/>
            <person name="Grindle S."/>
            <person name="Dignard D."/>
            <person name="Hogues H."/>
            <person name="Cuomo C."/>
            <person name="Berriman M."/>
            <person name="Scherer S."/>
            <person name="Magee B.B."/>
            <person name="Whiteway M."/>
            <person name="Chibana H."/>
            <person name="Nantel A."/>
            <person name="Magee P.T."/>
        </authorList>
    </citation>
    <scope>GENOME REANNOTATION</scope>
    <source>
        <strain>SC5314 / ATCC MYA-2876</strain>
    </source>
</reference>
<reference key="3">
    <citation type="journal article" date="2013" name="Genome Biol.">
        <title>Assembly of a phased diploid Candida albicans genome facilitates allele-specific measurements and provides a simple model for repeat and indel structure.</title>
        <authorList>
            <person name="Muzzey D."/>
            <person name="Schwartz K."/>
            <person name="Weissman J.S."/>
            <person name="Sherlock G."/>
        </authorList>
    </citation>
    <scope>NUCLEOTIDE SEQUENCE [LARGE SCALE GENOMIC DNA]</scope>
    <scope>GENOME REANNOTATION</scope>
    <source>
        <strain>SC5314 / ATCC MYA-2876</strain>
    </source>
</reference>
<reference key="4">
    <citation type="journal article" date="1997" name="Cell">
        <title>Nonfilamentous C. albicans mutants are avirulent.</title>
        <authorList>
            <person name="Lo H.J."/>
            <person name="Kohler J.R."/>
            <person name="DiDomenico B."/>
            <person name="Loebenberg D."/>
            <person name="Cacciapuoti A."/>
            <person name="Fink G.R."/>
        </authorList>
    </citation>
    <scope>FUNCTION</scope>
</reference>
<reference key="5">
    <citation type="journal article" date="1998" name="Microbiology">
        <title>A Candida albicans chaperonin subunit (CaCct8p) as a suppressor of morphogenesis and Ras phenotypes in C. albicans and Saccharomyces cerevisiae.</title>
        <authorList>
            <person name="Rademacher F."/>
            <person name="Kehren V."/>
            <person name="Stoldt V.R."/>
            <person name="Ernst J.F."/>
        </authorList>
    </citation>
    <scope>FUNCTION</scope>
</reference>
<reference key="6">
    <citation type="journal article" date="1999" name="Infect. Immun.">
        <title>Invasive lesions containing filamentous forms produced by a Candida albicans mutant that is defective in filamentous growth in culture.</title>
        <authorList>
            <person name="Riggle P.J."/>
            <person name="Andrutis K.A."/>
            <person name="Chen X."/>
            <person name="Tzipori S.R."/>
            <person name="Kumamoto C.A."/>
        </authorList>
    </citation>
    <scope>FUNCTION</scope>
</reference>
<reference key="7">
    <citation type="journal article" date="1999" name="Infect. Immun.">
        <title>Control of white-opaque phenotypic switching in Candida albicans by the Efg1p morphogenetic regulator.</title>
        <authorList>
            <person name="Sonneborn A."/>
            <person name="Tebarth B."/>
            <person name="Ernst J.F."/>
        </authorList>
    </citation>
    <scope>FUNCTION</scope>
    <scope>INDUCTION</scope>
</reference>
<reference key="8">
    <citation type="journal article" date="1999" name="Infect. Immun.">
        <title>Chlamydospore formation in Candida albicans requires the Efg1p morphogenetic regulator.</title>
        <authorList>
            <person name="Sonneborn A."/>
            <person name="Bockmuhl D.P."/>
            <person name="Ernst J.F."/>
        </authorList>
    </citation>
    <scope>FUNCTION</scope>
    <scope>MUTAGENESIS OF THR-208</scope>
</reference>
<reference key="9">
    <citation type="journal article" date="2000" name="Genetics">
        <title>TUP1, CPH1 and EFG1 make independent contributions to filamentation in Candida albicans.</title>
        <authorList>
            <person name="Braun B.R."/>
            <person name="Johnson A.D."/>
        </authorList>
    </citation>
    <scope>FUNCTION</scope>
</reference>
<reference key="10">
    <citation type="journal article" date="2000" name="Infect. Immun.">
        <title>Role of hyphal formation in interactions of Candida albicans with endothelial cells.</title>
        <authorList>
            <person name="Phan Q.T."/>
            <person name="Belanger P.H."/>
            <person name="Filler S.G."/>
        </authorList>
    </citation>
    <scope>FUNCTION</scope>
</reference>
<reference key="11">
    <citation type="journal article" date="2000" name="J. Bacteriol.">
        <title>EFG1 null mutants of Candida albicans switch but cannot express the complete phenotype of white-phase budding cells.</title>
        <authorList>
            <person name="Srikantha T."/>
            <person name="Tsai L.K."/>
            <person name="Daniels K."/>
            <person name="Soll D.R."/>
        </authorList>
    </citation>
    <scope>FUNCTION</scope>
</reference>
<reference key="12">
    <citation type="journal article" date="2001" name="Genetics">
        <title>A potential phosphorylation site for an A-type kinase in the Efg1 regulator protein contributes to hyphal morphogenesis of Candida albicans.</title>
        <authorList>
            <person name="Bockmuhl D.P."/>
            <person name="Ernst J.F."/>
        </authorList>
    </citation>
    <scope>FUNCTION</scope>
    <scope>MUTAGENESIS OF THR-208</scope>
    <scope>PHOSPHORYLATION AT THR-208</scope>
</reference>
<reference key="13">
    <citation type="journal article" date="2001" name="J. Bacteriol.">
        <title>Efg1, a morphogenetic regulator in Candida albicans, is a sequence-specific DNA binding protein.</title>
        <authorList>
            <person name="Leng P."/>
            <person name="Lee P.R."/>
            <person name="Wu H."/>
            <person name="Brown A.J."/>
        </authorList>
    </citation>
    <scope>FUNCTION</scope>
    <scope>DNA-BINDING</scope>
</reference>
<reference key="14">
    <citation type="journal article" date="2001" name="J. Biol. Chem.">
        <title>DNA array studies demonstrate convergent regulation of virulence factors by Cph1, Cph2, and Efg1 in Candida albicans.</title>
        <authorList>
            <person name="Lane S."/>
            <person name="Birse C."/>
            <person name="Zhou S."/>
            <person name="Matson R."/>
            <person name="Liu H."/>
        </authorList>
    </citation>
    <scope>FUNCTION</scope>
</reference>
<reference key="15">
    <citation type="journal article" date="2002" name="FEMS Microbiol. Lett.">
        <title>The filamentation pathway controlled by the Efg1 regulator protein is required for normal biofilm formation and development in Candida albicans.</title>
        <authorList>
            <person name="Ramage G."/>
            <person name="VandeWalle K."/>
            <person name="Lopez-Ribot J.L."/>
            <person name="Wickes B.L."/>
        </authorList>
    </citation>
    <scope>FUNCTION</scope>
</reference>
<reference key="16">
    <citation type="journal article" date="2002" name="Genetics">
        <title>Invasive filamentous growth of Candida albicans is promoted by Czf1p-dependent relief of Efg1p-mediated repression.</title>
        <authorList>
            <person name="Giusani A.D."/>
            <person name="Vinces M."/>
            <person name="Kumamoto C.A."/>
        </authorList>
    </citation>
    <scope>FUNCTION</scope>
    <scope>INTERACTION WITH CZF1</scope>
</reference>
<reference key="17">
    <citation type="journal article" date="2002" name="Infect. Immun.">
        <title>Transcriptional regulators Cph1p and Efg1p mediate activation of the Candida albicans virulence gene SAP5 during infection.</title>
        <authorList>
            <person name="Staib P."/>
            <person name="Kretschmar M."/>
            <person name="Nichterlein T."/>
            <person name="Hof H."/>
            <person name="Morschhauser J."/>
        </authorList>
    </citation>
    <scope>FUNCTION</scope>
</reference>
<reference key="18">
    <citation type="journal article" date="2002" name="Infect. Immun.">
        <title>Candida albicans hyphal formation and the expression of the Efg1-regulated proteinases Sap4 to Sap6 are required for the invasion of parenchymal organs.</title>
        <authorList>
            <person name="Felk A."/>
            <person name="Kretschmar M."/>
            <person name="Albrecht A."/>
            <person name="Schaller M."/>
            <person name="Beinhauer S."/>
            <person name="Nichterlein T."/>
            <person name="Sanglard D."/>
            <person name="Korting H.C."/>
            <person name="Schafer W."/>
            <person name="Hube B."/>
        </authorList>
    </citation>
    <scope>FUNCTION</scope>
</reference>
<reference key="19">
    <citation type="journal article" date="2002" name="Microbiology">
        <title>In vitro reconstructed human epithelia reveal contributions of Candida albicans EFG1 and CPH1 to adhesion and invasion.</title>
        <authorList>
            <person name="Dieterich C."/>
            <person name="Schandar M."/>
            <person name="Noll M."/>
            <person name="Johannes F.J."/>
            <person name="Brunner H."/>
            <person name="Graeve T."/>
            <person name="Rupp S."/>
        </authorList>
    </citation>
    <scope>FUNCTION</scope>
</reference>
<reference key="20">
    <citation type="journal article" date="2003" name="J. Mol. Biol.">
        <title>Adaptation of the Efg1p morphogenetic pathway in Candida albicans by negative autoregulation and PKA-dependent repression of the EFG1 gene.</title>
        <authorList>
            <person name="Tebarth B."/>
            <person name="Doedt T."/>
            <person name="Krishnamurthy S."/>
            <person name="Weide M."/>
            <person name="Monterola F."/>
            <person name="Dominguez A."/>
            <person name="Ernst J.F."/>
        </authorList>
    </citation>
    <scope>INDUCTION</scope>
</reference>
<reference key="21">
    <citation type="journal article" date="2003" name="Mol. Microbiol.">
        <title>EFG1 is a major regulator of cell wall dynamics in Candida albicans as revealed by DNA microarrays.</title>
        <authorList>
            <person name="Sohn K."/>
            <person name="Urban C."/>
            <person name="Brunner H."/>
            <person name="Rupp S."/>
        </authorList>
    </citation>
    <scope>FUNCTION</scope>
</reference>
<reference key="22">
    <citation type="journal article" date="2003" name="Mol. Microbiol.">
        <title>The regulation of EFG1 in white-opaque switching in Candida albicans involves overlapping promoters.</title>
        <authorList>
            <person name="Lachke S.A."/>
            <person name="Srikantha T."/>
            <person name="Soll D.R."/>
        </authorList>
    </citation>
    <scope>INDUCTION</scope>
</reference>
<reference key="23">
    <citation type="journal article" date="2005" name="Antimicrob. Agents Chemother.">
        <title>Efg1 involved in drug resistance by regulating the expression of ERG3 in Candida albicans.</title>
        <authorList>
            <person name="Lo H.J."/>
            <person name="Wang J.S."/>
            <person name="Lin C.Y."/>
            <person name="Chen C.G."/>
            <person name="Hsiao T.Y."/>
            <person name="Hsu C.T."/>
            <person name="Su C.L."/>
            <person name="Fann M.J."/>
            <person name="Ching Y.T."/>
            <person name="Yang Y.L."/>
        </authorList>
    </citation>
    <scope>FUNCTION</scope>
</reference>
<reference key="24">
    <citation type="journal article" date="2006" name="FEMS Microbiol. Lett.">
        <title>A role for Efg1p in Candida albicans interactions with extracellular matrices.</title>
        <authorList>
            <person name="Saville S.P."/>
            <person name="Thomas D.P."/>
            <person name="Lopez Ribot J.L."/>
        </authorList>
    </citation>
    <scope>FUNCTION</scope>
</reference>
<reference key="25">
    <citation type="journal article" date="2006" name="Mol. Biol. Cell">
        <title>The Flo8 transcription factor is essential for hyphal development and virulence in Candida albicans.</title>
        <authorList>
            <person name="Cao F."/>
            <person name="Lane S."/>
            <person name="Raniga P.P."/>
            <person name="Lu Y."/>
            <person name="Zhou Z."/>
            <person name="Ramon K."/>
            <person name="Chen J."/>
            <person name="Liu H."/>
        </authorList>
    </citation>
    <scope>FUNCTION</scope>
    <scope>INTERACTION WITH FLO8</scope>
</reference>
<reference key="26">
    <citation type="journal article" date="2007" name="PLoS Biol.">
        <title>Interlocking transcriptional feedback loops control white-opaque switching in Candida albicans.</title>
        <authorList>
            <person name="Zordan R.E."/>
            <person name="Miller M.G."/>
            <person name="Galgoczy D.J."/>
            <person name="Tuch B.B."/>
            <person name="Johnson A.D."/>
        </authorList>
    </citation>
    <scope>FUNCTION</scope>
</reference>
<reference key="27">
    <citation type="journal article" date="2008" name="Eukaryot. Cell">
        <title>Functional mapping of the Candida albicans Efg1 regulator.</title>
        <authorList>
            <person name="Noffz C.S."/>
            <person name="Liedschulte V."/>
            <person name="Lengeler K."/>
            <person name="Ernst J.F."/>
        </authorList>
    </citation>
    <scope>FUNCTION</scope>
    <scope>DOMAIN</scope>
    <scope>INTERACTION WITH CZF1 AND FLO8</scope>
</reference>
<reference key="28">
    <citation type="journal article" date="2009" name="Appl. Environ. Microbiol.">
        <title>Hypoxic adaptation by Efg1 regulates biofilm formation by Candida albicans.</title>
        <authorList>
            <person name="Stichternoth C."/>
            <person name="Ernst J.F."/>
        </authorList>
    </citation>
    <scope>FUNCTION</scope>
</reference>
<reference key="29">
    <citation type="journal article" date="2009" name="Mol. Cell. Biol.">
        <title>Hyphal chain formation in Candida albicans: Cdc28-Hgc1 phosphorylation of Efg1 represses cell separation genes.</title>
        <authorList>
            <person name="Wang A."/>
            <person name="Raniga P.P."/>
            <person name="Lane S."/>
            <person name="Lu Y."/>
            <person name="Liu H."/>
        </authorList>
    </citation>
    <scope>PHOSPHORYLATION AT THR-181</scope>
    <scope>FUNCTION</scope>
</reference>
<reference key="30">
    <citation type="journal article" date="2009" name="PLoS Pathog.">
        <title>The protein kinase Tor1 regulates adhesin gene expression in Candida albicans.</title>
        <authorList>
            <person name="Bastidas R.J."/>
            <person name="Heitman J."/>
            <person name="Cardenas M.E."/>
        </authorList>
    </citation>
    <scope>FUNCTION</scope>
</reference>
<reference key="31">
    <citation type="journal article" date="2010" name="FEMS Yeast Res.">
        <title>Morphogenic regulator EFG1 affects the drug susceptibilities of pathogenic Candida albicans.</title>
        <authorList>
            <person name="Prasad T."/>
            <person name="Hameed S."/>
            <person name="Manoharlal R."/>
            <person name="Biswas S."/>
            <person name="Mukhopadhyay C.K."/>
            <person name="Goswami S.K."/>
            <person name="Prasad R."/>
        </authorList>
    </citation>
    <scope>FUNCTION</scope>
</reference>
<reference key="32">
    <citation type="journal article" date="2010" name="Mol. Microbiol.">
        <title>Temporal anatomy of an epigenetic switch in cell programming: the white-opaque transition of C. albicans.</title>
        <authorList>
            <person name="Lohse M.B."/>
            <person name="Johnson A.D."/>
        </authorList>
    </citation>
    <scope>FUNCTION</scope>
</reference>
<reference key="33">
    <citation type="journal article" date="2011" name="Mol. Microbiol.">
        <title>Target specificity of the Candida albicans Efg1 regulator.</title>
        <authorList>
            <person name="Lassak T."/>
            <person name="Schneider E."/>
            <person name="Bussmann M."/>
            <person name="Kurtz D."/>
            <person name="Manak J.R."/>
            <person name="Srikantha T."/>
            <person name="Soll D.R."/>
            <person name="Ernst J.F."/>
        </authorList>
    </citation>
    <scope>FUNCTION</scope>
    <scope>DNA-BINDING</scope>
    <scope>INDUCTION</scope>
</reference>
<reference key="34">
    <citation type="journal article" date="2012" name="PLoS ONE">
        <title>Functional importance of the DNA binding activity of Candida albicans Czf1p.</title>
        <authorList>
            <person name="Petrovska I."/>
            <person name="Kumamoto C.A."/>
        </authorList>
    </citation>
    <scope>FUNCTION</scope>
    <scope>INTERACTION WITH CZF1</scope>
</reference>
<sequence>MSTYSIPYYNQMNGNYNNGMPQQTTAANQQAFPQQQQPTTTGNASQQQQQAAATAAAAAVQQPYNYMFYQQQGQPGQQTGQTAGQQQQQQQQQQQYDYNTYNRYQYPAATSQGNYYQQTIPNQLSQPQPQHYNGSNRNYTSAPSGAPIPSNSTSGPSQQPPLPGQQAVPIPPHVSTMQQPTPVQDTLNASSTSTVGQFQPPGIRPRVTTTMWEDEKTLCYQVDANNVSVVRRADNNMINGTKLLNVAQMTRGRRDGILKSEKVRHVVKIGSMHLKGVWIPFERALAMAQREQIVDMLYPLFVRDIKRVIQTGVTPNAAAATAAAAATATSASAPPPPPPPVAAATTTAATAISKSSSGNGNSISATSGGSNVSGASGAGSTTSPVNTKAATTAGTPQGNYYQTYNQQQYPQQYGQYNAPGKNQNTPASQPGSTTNDQYLQQQQQMYGYQSNYYQGGAANSSYYPNYYQQQQPNYASSYPYQQQQQKQQQQQPNQQQQSDQQQTSTPSGGAGTRSVHQSPQVQSLTQGSVHPSPQQHQANQSASTVAKEEK</sequence>
<keyword id="KW-0130">Cell adhesion</keyword>
<keyword id="KW-0238">DNA-binding</keyword>
<keyword id="KW-0539">Nucleus</keyword>
<keyword id="KW-0597">Phosphoprotein</keyword>
<keyword id="KW-1185">Reference proteome</keyword>
<keyword id="KW-0804">Transcription</keyword>
<keyword id="KW-0805">Transcription regulation</keyword>
<keyword id="KW-0843">Virulence</keyword>
<dbReference type="EMBL" id="CP017630">
    <property type="protein sequence ID" value="AOW31479.1"/>
    <property type="molecule type" value="Genomic_DNA"/>
</dbReference>
<dbReference type="RefSeq" id="XP_714237.2">
    <property type="nucleotide sequence ID" value="XM_709144.2"/>
</dbReference>
<dbReference type="SMR" id="Q59X67"/>
<dbReference type="BioGRID" id="1227239">
    <property type="interactions" value="12"/>
</dbReference>
<dbReference type="STRING" id="237561.Q59X67"/>
<dbReference type="iPTMnet" id="Q59X67"/>
<dbReference type="EnsemblFungi" id="CR_07890W_A-T">
    <property type="protein sequence ID" value="CR_07890W_A-T-p1"/>
    <property type="gene ID" value="CR_07890W_A"/>
</dbReference>
<dbReference type="GeneID" id="3644145"/>
<dbReference type="KEGG" id="cal:CAALFM_CR07890WA"/>
<dbReference type="CGD" id="CAL0000201973">
    <property type="gene designation" value="EFG1"/>
</dbReference>
<dbReference type="VEuPathDB" id="FungiDB:CR_07890W_A"/>
<dbReference type="eggNOG" id="ENOG502QW2C">
    <property type="taxonomic scope" value="Eukaryota"/>
</dbReference>
<dbReference type="HOGENOM" id="CLU_032570_0_0_1"/>
<dbReference type="InParanoid" id="Q59X67"/>
<dbReference type="OrthoDB" id="5407653at2759"/>
<dbReference type="CD-CODE" id="1E246C77">
    <property type="entry name" value="Transcriptional condensate"/>
</dbReference>
<dbReference type="PHI-base" id="PHI:10195"/>
<dbReference type="PHI-base" id="PHI:10231"/>
<dbReference type="PHI-base" id="PHI:10319"/>
<dbReference type="PHI-base" id="PHI:3505"/>
<dbReference type="PHI-base" id="PHI:6671"/>
<dbReference type="PHI-base" id="PHI:6801"/>
<dbReference type="PHI-base" id="PHI:6805"/>
<dbReference type="PRO" id="PR:Q59X67"/>
<dbReference type="Proteomes" id="UP000000559">
    <property type="component" value="Chromosome R"/>
</dbReference>
<dbReference type="GO" id="GO:0000785">
    <property type="term" value="C:chromatin"/>
    <property type="evidence" value="ECO:0000314"/>
    <property type="project" value="CGD"/>
</dbReference>
<dbReference type="GO" id="GO:0005634">
    <property type="term" value="C:nucleus"/>
    <property type="evidence" value="ECO:0000314"/>
    <property type="project" value="CGD"/>
</dbReference>
<dbReference type="GO" id="GO:0003677">
    <property type="term" value="F:DNA binding"/>
    <property type="evidence" value="ECO:0000314"/>
    <property type="project" value="CGD"/>
</dbReference>
<dbReference type="GO" id="GO:0001216">
    <property type="term" value="F:DNA-binding transcription activator activity"/>
    <property type="evidence" value="ECO:0000315"/>
    <property type="project" value="CGD"/>
</dbReference>
<dbReference type="GO" id="GO:0003700">
    <property type="term" value="F:DNA-binding transcription factor activity"/>
    <property type="evidence" value="ECO:0000314"/>
    <property type="project" value="CGD"/>
</dbReference>
<dbReference type="GO" id="GO:0043565">
    <property type="term" value="F:sequence-specific DNA binding"/>
    <property type="evidence" value="ECO:0000314"/>
    <property type="project" value="CGD"/>
</dbReference>
<dbReference type="GO" id="GO:0044406">
    <property type="term" value="P:adhesion of symbiont to host"/>
    <property type="evidence" value="ECO:0000315"/>
    <property type="project" value="CGD"/>
</dbReference>
<dbReference type="GO" id="GO:0044403">
    <property type="term" value="P:biological process involved in symbiotic interaction"/>
    <property type="evidence" value="ECO:0000315"/>
    <property type="project" value="CGD"/>
</dbReference>
<dbReference type="GO" id="GO:0007155">
    <property type="term" value="P:cell adhesion"/>
    <property type="evidence" value="ECO:0000315"/>
    <property type="project" value="CGD"/>
</dbReference>
<dbReference type="GO" id="GO:0036187">
    <property type="term" value="P:cell growth mode switching, budding to filamentous"/>
    <property type="evidence" value="ECO:0000315"/>
    <property type="project" value="CGD"/>
</dbReference>
<dbReference type="GO" id="GO:0016477">
    <property type="term" value="P:cell migration"/>
    <property type="evidence" value="ECO:0000315"/>
    <property type="project" value="CGD"/>
</dbReference>
<dbReference type="GO" id="GO:0000902">
    <property type="term" value="P:cell morphogenesis"/>
    <property type="evidence" value="ECO:0000315"/>
    <property type="project" value="CGD"/>
</dbReference>
<dbReference type="GO" id="GO:0031589">
    <property type="term" value="P:cell-substrate adhesion"/>
    <property type="evidence" value="ECO:0000315"/>
    <property type="project" value="CGD"/>
</dbReference>
<dbReference type="GO" id="GO:0048869">
    <property type="term" value="P:cellular developmental process"/>
    <property type="evidence" value="ECO:0000315"/>
    <property type="project" value="CGD"/>
</dbReference>
<dbReference type="GO" id="GO:0097316">
    <property type="term" value="P:cellular response to N-acetyl-D-glucosamine"/>
    <property type="evidence" value="ECO:0000315"/>
    <property type="project" value="CGD"/>
</dbReference>
<dbReference type="GO" id="GO:0036244">
    <property type="term" value="P:cellular response to neutral pH"/>
    <property type="evidence" value="ECO:0000315"/>
    <property type="project" value="CGD"/>
</dbReference>
<dbReference type="GO" id="GO:0031670">
    <property type="term" value="P:cellular response to nutrient"/>
    <property type="evidence" value="ECO:0000315"/>
    <property type="project" value="CGD"/>
</dbReference>
<dbReference type="GO" id="GO:0009267">
    <property type="term" value="P:cellular response to starvation"/>
    <property type="evidence" value="ECO:0000315"/>
    <property type="project" value="CGD"/>
</dbReference>
<dbReference type="GO" id="GO:0001410">
    <property type="term" value="P:chlamydospore formation"/>
    <property type="evidence" value="ECO:0000315"/>
    <property type="project" value="CGD"/>
</dbReference>
<dbReference type="GO" id="GO:0044114">
    <property type="term" value="P:development of symbiont in host"/>
    <property type="evidence" value="ECO:0000315"/>
    <property type="project" value="CGD"/>
</dbReference>
<dbReference type="GO" id="GO:0030447">
    <property type="term" value="P:filamentous growth"/>
    <property type="evidence" value="ECO:0000315"/>
    <property type="project" value="CGD"/>
</dbReference>
<dbReference type="GO" id="GO:0044182">
    <property type="term" value="P:filamentous growth of a population of unicellular organisms"/>
    <property type="evidence" value="ECO:0000315"/>
    <property type="project" value="CGD"/>
</dbReference>
<dbReference type="GO" id="GO:0036180">
    <property type="term" value="P:filamentous growth of a population of unicellular organisms in response to biotic stimulus"/>
    <property type="evidence" value="ECO:0000315"/>
    <property type="project" value="CGD"/>
</dbReference>
<dbReference type="GO" id="GO:0036171">
    <property type="term" value="P:filamentous growth of a population of unicellular organisms in response to chemical stimulus"/>
    <property type="evidence" value="ECO:0000315"/>
    <property type="project" value="CGD"/>
</dbReference>
<dbReference type="GO" id="GO:0036178">
    <property type="term" value="P:filamentous growth of a population of unicellular organisms in response to neutral pH"/>
    <property type="evidence" value="ECO:0000315"/>
    <property type="project" value="CGD"/>
</dbReference>
<dbReference type="GO" id="GO:0036170">
    <property type="term" value="P:filamentous growth of a population of unicellular organisms in response to starvation"/>
    <property type="evidence" value="ECO:0000315"/>
    <property type="project" value="CGD"/>
</dbReference>
<dbReference type="GO" id="GO:0000128">
    <property type="term" value="P:flocculation"/>
    <property type="evidence" value="ECO:0000315"/>
    <property type="project" value="CGD"/>
</dbReference>
<dbReference type="GO" id="GO:0030448">
    <property type="term" value="P:hyphal growth"/>
    <property type="evidence" value="ECO:0000315"/>
    <property type="project" value="CGD"/>
</dbReference>
<dbReference type="GO" id="GO:0007618">
    <property type="term" value="P:mating"/>
    <property type="evidence" value="ECO:0000315"/>
    <property type="project" value="CGD"/>
</dbReference>
<dbReference type="GO" id="GO:0000122">
    <property type="term" value="P:negative regulation of transcription by RNA polymerase II"/>
    <property type="evidence" value="ECO:0000315"/>
    <property type="project" value="CGD"/>
</dbReference>
<dbReference type="GO" id="GO:0036166">
    <property type="term" value="P:phenotypic switching"/>
    <property type="evidence" value="ECO:0000315"/>
    <property type="project" value="CGD"/>
</dbReference>
<dbReference type="GO" id="GO:0010811">
    <property type="term" value="P:positive regulation of cell-substrate adhesion"/>
    <property type="evidence" value="ECO:0000315"/>
    <property type="project" value="CGD"/>
</dbReference>
<dbReference type="GO" id="GO:1900430">
    <property type="term" value="P:positive regulation of filamentous growth of a population of unicellular organisms"/>
    <property type="evidence" value="ECO:0000315"/>
    <property type="project" value="CGD"/>
</dbReference>
<dbReference type="GO" id="GO:1900445">
    <property type="term" value="P:positive regulation of filamentous growth of a population of unicellular organisms in response to biotic stimulus"/>
    <property type="evidence" value="ECO:0000315"/>
    <property type="project" value="CGD"/>
</dbReference>
<dbReference type="GO" id="GO:1900439">
    <property type="term" value="P:positive regulation of filamentous growth of a population of unicellular organisms in response to chemical stimulus"/>
    <property type="evidence" value="ECO:0000315"/>
    <property type="project" value="CGD"/>
</dbReference>
<dbReference type="GO" id="GO:1900442">
    <property type="term" value="P:positive regulation of filamentous growth of a population of unicellular organisms in response to neutral pH"/>
    <property type="evidence" value="ECO:0000315"/>
    <property type="project" value="CGD"/>
</dbReference>
<dbReference type="GO" id="GO:1900743">
    <property type="term" value="P:positive regulation of filamentous growth of a population of unicellular organisms in response to pH"/>
    <property type="evidence" value="ECO:0000315"/>
    <property type="project" value="CGD"/>
</dbReference>
<dbReference type="GO" id="GO:1900436">
    <property type="term" value="P:positive regulation of filamentous growth of a population of unicellular organisms in response to starvation"/>
    <property type="evidence" value="ECO:0000315"/>
    <property type="project" value="CGD"/>
</dbReference>
<dbReference type="GO" id="GO:1900241">
    <property type="term" value="P:positive regulation of phenotypic switching"/>
    <property type="evidence" value="ECO:0000315"/>
    <property type="project" value="CGD"/>
</dbReference>
<dbReference type="GO" id="GO:2000222">
    <property type="term" value="P:positive regulation of pseudohyphal growth"/>
    <property type="evidence" value="ECO:0000315"/>
    <property type="project" value="CGD"/>
</dbReference>
<dbReference type="GO" id="GO:0045944">
    <property type="term" value="P:positive regulation of transcription by RNA polymerase II"/>
    <property type="evidence" value="ECO:0000315"/>
    <property type="project" value="CGD"/>
</dbReference>
<dbReference type="GO" id="GO:0007124">
    <property type="term" value="P:pseudohyphal growth"/>
    <property type="evidence" value="ECO:0000315"/>
    <property type="project" value="CGD"/>
</dbReference>
<dbReference type="GO" id="GO:0045595">
    <property type="term" value="P:regulation of cell differentiation"/>
    <property type="evidence" value="ECO:0000315"/>
    <property type="project" value="CGD"/>
</dbReference>
<dbReference type="GO" id="GO:0006355">
    <property type="term" value="P:regulation of DNA-templated transcription"/>
    <property type="evidence" value="ECO:0000315"/>
    <property type="project" value="CGD"/>
</dbReference>
<dbReference type="GO" id="GO:1900239">
    <property type="term" value="P:regulation of phenotypic switching"/>
    <property type="evidence" value="ECO:0000315"/>
    <property type="project" value="CGD"/>
</dbReference>
<dbReference type="GO" id="GO:1900231">
    <property type="term" value="P:regulation of single-species biofilm formation on inanimate substrate"/>
    <property type="evidence" value="ECO:0000315"/>
    <property type="project" value="CGD"/>
</dbReference>
<dbReference type="GO" id="GO:0006357">
    <property type="term" value="P:regulation of transcription by RNA polymerase II"/>
    <property type="evidence" value="ECO:0000315"/>
    <property type="project" value="CGD"/>
</dbReference>
<dbReference type="GO" id="GO:0044011">
    <property type="term" value="P:single-species biofilm formation on inanimate substrate"/>
    <property type="evidence" value="ECO:0000315"/>
    <property type="project" value="CGD"/>
</dbReference>
<dbReference type="GO" id="GO:0044409">
    <property type="term" value="P:symbiont entry into host"/>
    <property type="evidence" value="ECO:0000315"/>
    <property type="project" value="CGD"/>
</dbReference>
<dbReference type="GO" id="GO:0042783">
    <property type="term" value="P:symbiont-mediated evasion of host immune response"/>
    <property type="evidence" value="ECO:0000315"/>
    <property type="project" value="CGD"/>
</dbReference>
<dbReference type="FunFam" id="3.10.260.10:FF:000009">
    <property type="entry name" value="Enhanced filamentous growth protein 1"/>
    <property type="match status" value="1"/>
</dbReference>
<dbReference type="Gene3D" id="3.10.260.10">
    <property type="entry name" value="Transcription regulator HTH, APSES-type DNA-binding domain"/>
    <property type="match status" value="1"/>
</dbReference>
<dbReference type="InterPro" id="IPR029790">
    <property type="entry name" value="EFG1/Phd1/StuA"/>
</dbReference>
<dbReference type="InterPro" id="IPR036887">
    <property type="entry name" value="HTH_APSES_sf"/>
</dbReference>
<dbReference type="InterPro" id="IPR018004">
    <property type="entry name" value="KilA/APSES_HTH"/>
</dbReference>
<dbReference type="InterPro" id="IPR003163">
    <property type="entry name" value="Tscrpt_reg_HTH_APSES-type"/>
</dbReference>
<dbReference type="PANTHER" id="PTHR47792">
    <property type="entry name" value="PROTEIN SOK2-RELATED"/>
    <property type="match status" value="1"/>
</dbReference>
<dbReference type="PANTHER" id="PTHR47792:SF1">
    <property type="entry name" value="PROTEIN SOK2-RELATED"/>
    <property type="match status" value="1"/>
</dbReference>
<dbReference type="Pfam" id="PF04383">
    <property type="entry name" value="KilA-N"/>
    <property type="match status" value="1"/>
</dbReference>
<dbReference type="SMART" id="SM01252">
    <property type="entry name" value="KilA-N"/>
    <property type="match status" value="1"/>
</dbReference>
<dbReference type="SUPFAM" id="SSF54616">
    <property type="entry name" value="DNA-binding domain of Mlu1-box binding protein MBP1"/>
    <property type="match status" value="1"/>
</dbReference>
<dbReference type="PROSITE" id="PS51299">
    <property type="entry name" value="HTH_APSES"/>
    <property type="match status" value="1"/>
</dbReference>